<gene>
    <name type="primary">tsf</name>
</gene>
<proteinExistence type="inferred from homology"/>
<reference key="1">
    <citation type="journal article" date="2000" name="J. Mol. Evol.">
        <title>The structure and gene repertoire of an ancient red algal plastid genome.</title>
        <authorList>
            <person name="Gloeckner G."/>
            <person name="Rosenthal A."/>
            <person name="Valentin K.-U."/>
        </authorList>
    </citation>
    <scope>NUCLEOTIDE SEQUENCE [LARGE SCALE GENOMIC DNA]</scope>
    <source>
        <strain>RK-1</strain>
    </source>
</reference>
<accession>Q9TM32</accession>
<sequence length="208" mass="23858">MSNKSSKTSKVSIDLIKQLREKTGVSIKDCKEALRKHDGDIAKALREIQEQGSAIAQEKHNRITVHGRIASYIHINNRMGSLVEINCETDSAANSEEFAKLCQHIAMQIVACPEIKYVKFEDIPEEIKNHYIEVESQSKDLQDKPAQSKNKIIRGRIDKKLRRMCLLDQANIKDDKVTVNDLIKEKINKFKENIQINRFARFTIGEKI</sequence>
<name>EFTS_CYACA</name>
<evidence type="ECO:0000255" key="1">
    <source>
        <dbReference type="HAMAP-Rule" id="MF_03135"/>
    </source>
</evidence>
<comment type="function">
    <text evidence="1">Associates with the EF-Tu.GDP complex and induces the exchange of GDP to GTP. It remains bound to the aminoacyl-tRNA.EF-Tu.GTP complex up to the GTP hydrolysis stage on the ribosome.</text>
</comment>
<comment type="subcellular location">
    <subcellularLocation>
        <location>Plastid</location>
        <location>Chloroplast</location>
    </subcellularLocation>
</comment>
<comment type="similarity">
    <text evidence="1">Belongs to the EF-Ts family.</text>
</comment>
<feature type="chain" id="PRO_0000161244" description="Elongation factor Ts, chloroplastic">
    <location>
        <begin position="1"/>
        <end position="208"/>
    </location>
</feature>
<dbReference type="EMBL" id="AF022186">
    <property type="protein sequence ID" value="AAF13011.1"/>
    <property type="molecule type" value="Genomic_DNA"/>
</dbReference>
<dbReference type="RefSeq" id="NP_045035.1">
    <property type="nucleotide sequence ID" value="NC_001840.1"/>
</dbReference>
<dbReference type="SMR" id="Q9TM32"/>
<dbReference type="GeneID" id="800156"/>
<dbReference type="GO" id="GO:0009507">
    <property type="term" value="C:chloroplast"/>
    <property type="evidence" value="ECO:0007669"/>
    <property type="project" value="UniProtKB-SubCell"/>
</dbReference>
<dbReference type="GO" id="GO:0005739">
    <property type="term" value="C:mitochondrion"/>
    <property type="evidence" value="ECO:0007669"/>
    <property type="project" value="UniProtKB-UniRule"/>
</dbReference>
<dbReference type="GO" id="GO:0003746">
    <property type="term" value="F:translation elongation factor activity"/>
    <property type="evidence" value="ECO:0007669"/>
    <property type="project" value="UniProtKB-UniRule"/>
</dbReference>
<dbReference type="GO" id="GO:0070125">
    <property type="term" value="P:mitochondrial translational elongation"/>
    <property type="evidence" value="ECO:0007669"/>
    <property type="project" value="TreeGrafter"/>
</dbReference>
<dbReference type="CDD" id="cd14275">
    <property type="entry name" value="UBA_EF-Ts"/>
    <property type="match status" value="1"/>
</dbReference>
<dbReference type="FunFam" id="1.10.8.10:FF:000001">
    <property type="entry name" value="Elongation factor Ts"/>
    <property type="match status" value="1"/>
</dbReference>
<dbReference type="Gene3D" id="1.10.286.20">
    <property type="match status" value="1"/>
</dbReference>
<dbReference type="Gene3D" id="1.10.8.10">
    <property type="entry name" value="DNA helicase RuvA subunit, C-terminal domain"/>
    <property type="match status" value="1"/>
</dbReference>
<dbReference type="Gene3D" id="3.30.479.20">
    <property type="entry name" value="Elongation factor Ts, dimerisation domain"/>
    <property type="match status" value="1"/>
</dbReference>
<dbReference type="HAMAP" id="MF_00050">
    <property type="entry name" value="EF_Ts"/>
    <property type="match status" value="1"/>
</dbReference>
<dbReference type="InterPro" id="IPR036402">
    <property type="entry name" value="EF-Ts_dimer_sf"/>
</dbReference>
<dbReference type="InterPro" id="IPR001816">
    <property type="entry name" value="Transl_elong_EFTs/EF1B"/>
</dbReference>
<dbReference type="InterPro" id="IPR014039">
    <property type="entry name" value="Transl_elong_EFTs/EF1B_dimer"/>
</dbReference>
<dbReference type="InterPro" id="IPR018101">
    <property type="entry name" value="Transl_elong_Ts_CS"/>
</dbReference>
<dbReference type="InterPro" id="IPR009060">
    <property type="entry name" value="UBA-like_sf"/>
</dbReference>
<dbReference type="PANTHER" id="PTHR11741">
    <property type="entry name" value="ELONGATION FACTOR TS"/>
    <property type="match status" value="1"/>
</dbReference>
<dbReference type="PANTHER" id="PTHR11741:SF0">
    <property type="entry name" value="ELONGATION FACTOR TS, MITOCHONDRIAL"/>
    <property type="match status" value="1"/>
</dbReference>
<dbReference type="Pfam" id="PF00889">
    <property type="entry name" value="EF_TS"/>
    <property type="match status" value="1"/>
</dbReference>
<dbReference type="SUPFAM" id="SSF54713">
    <property type="entry name" value="Elongation factor Ts (EF-Ts), dimerisation domain"/>
    <property type="match status" value="1"/>
</dbReference>
<dbReference type="SUPFAM" id="SSF46934">
    <property type="entry name" value="UBA-like"/>
    <property type="match status" value="1"/>
</dbReference>
<dbReference type="PROSITE" id="PS01126">
    <property type="entry name" value="EF_TS_1"/>
    <property type="match status" value="1"/>
</dbReference>
<dbReference type="PROSITE" id="PS01127">
    <property type="entry name" value="EF_TS_2"/>
    <property type="match status" value="1"/>
</dbReference>
<protein>
    <recommendedName>
        <fullName>Elongation factor Ts, chloroplastic</fullName>
        <shortName evidence="1">EF-Ts</shortName>
    </recommendedName>
</protein>
<geneLocation type="chloroplast"/>
<organism>
    <name type="scientific">Cyanidium caldarium</name>
    <name type="common">Red alga</name>
    <dbReference type="NCBI Taxonomy" id="2771"/>
    <lineage>
        <taxon>Eukaryota</taxon>
        <taxon>Rhodophyta</taxon>
        <taxon>Bangiophyceae</taxon>
        <taxon>Cyanidiales</taxon>
        <taxon>Cyanidiaceae</taxon>
        <taxon>Cyanidium</taxon>
    </lineage>
</organism>
<keyword id="KW-0150">Chloroplast</keyword>
<keyword id="KW-0251">Elongation factor</keyword>
<keyword id="KW-0934">Plastid</keyword>
<keyword id="KW-0648">Protein biosynthesis</keyword>